<dbReference type="EMBL" id="CP000031">
    <property type="protein sequence ID" value="AAV93853.1"/>
    <property type="molecule type" value="Genomic_DNA"/>
</dbReference>
<dbReference type="RefSeq" id="WP_011046295.1">
    <property type="nucleotide sequence ID" value="NC_003911.12"/>
</dbReference>
<dbReference type="STRING" id="246200.SPO0536"/>
<dbReference type="PaxDb" id="246200-SPO0536"/>
<dbReference type="KEGG" id="sil:SPO0536"/>
<dbReference type="eggNOG" id="COG0759">
    <property type="taxonomic scope" value="Bacteria"/>
</dbReference>
<dbReference type="HOGENOM" id="CLU_144811_5_3_5"/>
<dbReference type="OrthoDB" id="9801753at2"/>
<dbReference type="Proteomes" id="UP000001023">
    <property type="component" value="Chromosome"/>
</dbReference>
<dbReference type="GO" id="GO:0005886">
    <property type="term" value="C:plasma membrane"/>
    <property type="evidence" value="ECO:0007669"/>
    <property type="project" value="UniProtKB-SubCell"/>
</dbReference>
<dbReference type="HAMAP" id="MF_00386">
    <property type="entry name" value="UPF0161_YidD"/>
    <property type="match status" value="1"/>
</dbReference>
<dbReference type="InterPro" id="IPR002696">
    <property type="entry name" value="Membr_insert_effic_factor_YidD"/>
</dbReference>
<dbReference type="NCBIfam" id="TIGR00278">
    <property type="entry name" value="membrane protein insertion efficiency factor YidD"/>
    <property type="match status" value="1"/>
</dbReference>
<dbReference type="PANTHER" id="PTHR33383">
    <property type="entry name" value="MEMBRANE PROTEIN INSERTION EFFICIENCY FACTOR-RELATED"/>
    <property type="match status" value="1"/>
</dbReference>
<dbReference type="PANTHER" id="PTHR33383:SF1">
    <property type="entry name" value="MEMBRANE PROTEIN INSERTION EFFICIENCY FACTOR-RELATED"/>
    <property type="match status" value="1"/>
</dbReference>
<dbReference type="Pfam" id="PF01809">
    <property type="entry name" value="YidD"/>
    <property type="match status" value="1"/>
</dbReference>
<dbReference type="SMART" id="SM01234">
    <property type="entry name" value="Haemolytic"/>
    <property type="match status" value="1"/>
</dbReference>
<proteinExistence type="inferred from homology"/>
<reference key="1">
    <citation type="journal article" date="2004" name="Nature">
        <title>Genome sequence of Silicibacter pomeroyi reveals adaptations to the marine environment.</title>
        <authorList>
            <person name="Moran M.A."/>
            <person name="Buchan A."/>
            <person name="Gonzalez J.M."/>
            <person name="Heidelberg J.F."/>
            <person name="Whitman W.B."/>
            <person name="Kiene R.P."/>
            <person name="Henriksen J.R."/>
            <person name="King G.M."/>
            <person name="Belas R."/>
            <person name="Fuqua C."/>
            <person name="Brinkac L.M."/>
            <person name="Lewis M."/>
            <person name="Johri S."/>
            <person name="Weaver B."/>
            <person name="Pai G."/>
            <person name="Eisen J.A."/>
            <person name="Rahe E."/>
            <person name="Sheldon W.M."/>
            <person name="Ye W."/>
            <person name="Miller T.R."/>
            <person name="Carlton J."/>
            <person name="Rasko D.A."/>
            <person name="Paulsen I.T."/>
            <person name="Ren Q."/>
            <person name="Daugherty S.C."/>
            <person name="DeBoy R.T."/>
            <person name="Dodson R.J."/>
            <person name="Durkin A.S."/>
            <person name="Madupu R."/>
            <person name="Nelson W.C."/>
            <person name="Sullivan S.A."/>
            <person name="Rosovitz M.J."/>
            <person name="Haft D.H."/>
            <person name="Selengut J."/>
            <person name="Ward N."/>
        </authorList>
    </citation>
    <scope>NUCLEOTIDE SEQUENCE [LARGE SCALE GENOMIC DNA]</scope>
    <source>
        <strain>ATCC 700808 / DSM 15171 / DSS-3</strain>
    </source>
</reference>
<reference key="2">
    <citation type="journal article" date="2014" name="Stand. Genomic Sci.">
        <title>An updated genome annotation for the model marine bacterium Ruegeria pomeroyi DSS-3.</title>
        <authorList>
            <person name="Rivers A.R."/>
            <person name="Smith C.B."/>
            <person name="Moran M.A."/>
        </authorList>
    </citation>
    <scope>GENOME REANNOTATION</scope>
    <source>
        <strain>ATCC 700808 / DSM 15171 / DSS-3</strain>
    </source>
</reference>
<comment type="function">
    <text evidence="1">Could be involved in insertion of integral membrane proteins into the membrane.</text>
</comment>
<comment type="subcellular location">
    <subcellularLocation>
        <location evidence="1">Cell inner membrane</location>
        <topology evidence="1">Peripheral membrane protein</topology>
        <orientation evidence="1">Cytoplasmic side</orientation>
    </subcellularLocation>
</comment>
<comment type="similarity">
    <text evidence="1">Belongs to the UPF0161 family.</text>
</comment>
<gene>
    <name type="ordered locus">SPO0536</name>
</gene>
<evidence type="ECO:0000255" key="1">
    <source>
        <dbReference type="HAMAP-Rule" id="MF_00386"/>
    </source>
</evidence>
<evidence type="ECO:0000256" key="2">
    <source>
        <dbReference type="SAM" id="MobiDB-lite"/>
    </source>
</evidence>
<keyword id="KW-0997">Cell inner membrane</keyword>
<keyword id="KW-1003">Cell membrane</keyword>
<keyword id="KW-0472">Membrane</keyword>
<keyword id="KW-1185">Reference proteome</keyword>
<sequence length="85" mass="9407">MTPLAHILALPVRAYRLIFSPWVGFNCRYQPTCSAYALEALEKHGALRGSWLAARRIGRCHPLGSDGYDPVPEPKDRKPPHSPAG</sequence>
<feature type="chain" id="PRO_0000253169" description="Putative membrane protein insertion efficiency factor">
    <location>
        <begin position="1"/>
        <end position="85"/>
    </location>
</feature>
<feature type="region of interest" description="Disordered" evidence="2">
    <location>
        <begin position="62"/>
        <end position="85"/>
    </location>
</feature>
<organism>
    <name type="scientific">Ruegeria pomeroyi (strain ATCC 700808 / DSM 15171 / DSS-3)</name>
    <name type="common">Silicibacter pomeroyi</name>
    <dbReference type="NCBI Taxonomy" id="246200"/>
    <lineage>
        <taxon>Bacteria</taxon>
        <taxon>Pseudomonadati</taxon>
        <taxon>Pseudomonadota</taxon>
        <taxon>Alphaproteobacteria</taxon>
        <taxon>Rhodobacterales</taxon>
        <taxon>Roseobacteraceae</taxon>
        <taxon>Ruegeria</taxon>
    </lineage>
</organism>
<protein>
    <recommendedName>
        <fullName evidence="1">Putative membrane protein insertion efficiency factor</fullName>
    </recommendedName>
</protein>
<accession>Q5LW07</accession>
<name>YIDD_RUEPO</name>